<keyword id="KW-0067">ATP-binding</keyword>
<keyword id="KW-0963">Cytoplasm</keyword>
<keyword id="KW-0210">Decarboxylase</keyword>
<keyword id="KW-0312">Gluconeogenesis</keyword>
<keyword id="KW-0456">Lyase</keyword>
<keyword id="KW-0547">Nucleotide-binding</keyword>
<protein>
    <recommendedName>
        <fullName>Phosphoenolpyruvate carboxykinase (ATP) 2</fullName>
        <ecNumber>4.1.1.49</ecNumber>
    </recommendedName>
</protein>
<accession>Q9XFA2</accession>
<proteinExistence type="evidence at transcript level"/>
<feature type="chain" id="PRO_0000203866" description="Phosphoenolpyruvate carboxykinase (ATP) 2">
    <location>
        <begin position="1"/>
        <end position="626"/>
    </location>
</feature>
<feature type="region of interest" description="Disordered" evidence="3">
    <location>
        <begin position="1"/>
        <end position="23"/>
    </location>
</feature>
<feature type="region of interest" description="Disordered" evidence="3">
    <location>
        <begin position="64"/>
        <end position="86"/>
    </location>
</feature>
<feature type="binding site" evidence="2">
    <location>
        <begin position="324"/>
        <end position="331"/>
    </location>
    <ligand>
        <name>ATP</name>
        <dbReference type="ChEBI" id="CHEBI:30616"/>
    </ligand>
</feature>
<organism>
    <name type="scientific">Urochloa panicoides</name>
    <name type="common">Panic liverseed grass</name>
    <dbReference type="NCBI Taxonomy" id="37563"/>
    <lineage>
        <taxon>Eukaryota</taxon>
        <taxon>Viridiplantae</taxon>
        <taxon>Streptophyta</taxon>
        <taxon>Embryophyta</taxon>
        <taxon>Tracheophyta</taxon>
        <taxon>Spermatophyta</taxon>
        <taxon>Magnoliopsida</taxon>
        <taxon>Liliopsida</taxon>
        <taxon>Poales</taxon>
        <taxon>Poaceae</taxon>
        <taxon>PACMAD clade</taxon>
        <taxon>Panicoideae</taxon>
        <taxon>Panicodae</taxon>
        <taxon>Paniceae</taxon>
        <taxon>Melinidinae</taxon>
        <taxon>Urochloa</taxon>
    </lineage>
</organism>
<comment type="catalytic activity">
    <reaction>
        <text>oxaloacetate + ATP = phosphoenolpyruvate + ADP + CO2</text>
        <dbReference type="Rhea" id="RHEA:18617"/>
        <dbReference type="ChEBI" id="CHEBI:16452"/>
        <dbReference type="ChEBI" id="CHEBI:16526"/>
        <dbReference type="ChEBI" id="CHEBI:30616"/>
        <dbReference type="ChEBI" id="CHEBI:58702"/>
        <dbReference type="ChEBI" id="CHEBI:456216"/>
        <dbReference type="EC" id="4.1.1.49"/>
    </reaction>
</comment>
<comment type="pathway">
    <text>Carbohydrate biosynthesis; gluconeogenesis.</text>
</comment>
<comment type="subunit">
    <text evidence="1">Homohexamer.</text>
</comment>
<comment type="subcellular location">
    <subcellularLocation>
        <location>Cytoplasm</location>
    </subcellularLocation>
</comment>
<comment type="similarity">
    <text evidence="4">Belongs to the phosphoenolpyruvate carboxykinase (ATP) family.</text>
</comment>
<name>PCKA2_UROPA</name>
<evidence type="ECO:0000250" key="1"/>
<evidence type="ECO:0000255" key="2"/>
<evidence type="ECO:0000256" key="3">
    <source>
        <dbReference type="SAM" id="MobiDB-lite"/>
    </source>
</evidence>
<evidence type="ECO:0000305" key="4"/>
<gene>
    <name type="primary">PCK2</name>
</gene>
<sequence>MASPNGGVTTYDYHDSDSAAPVNAQTIEELHSLQRKAATTTKDGASPLQSISASLASLAREYGPNLVKGDPEATKGAPPVPIKHQQPSAAAATIAASDSSLKFTHVLYNLSPAELYEQAFGQKKSSFITSTGALATLSGAKTGRSPRDKRVVKDETTSQELWWGKGSPNIEMDERQFVINRERALDYLNSLDKVYVNDQFLNWDSENRIKVRIITSRAYHALFMHNMCIRPTEEELESFGTPDFTIYNAGEFPANRYANYMTSSTSINISLARREMVILGTQYAGEMKKGLFGVMHYLMPKRGILSLHSGCNMGKEGDVALFFGLSGTGKTTLSTDHNRLLIGDDEHCWSDNGVSNIEGGCYAKCIDLSQEKEPDIWNAIKFGTVLENVVFNERTREVDYADKSITENTRAAYPIEFIPNAKIPCVGPHPKNVILLACDAYGVLPPVSKLNLAQTMYHFISGYTAIVAGTEDGVKEPTATFSACFGAAFIMYHPTKYAAMLAEKMQKYGATGWLVNTGWSGGRYGVGNRIKLPYTRKIIDAIHSGELLNASYKKTEVFGLEIPTAINGVPSEILGPVNTWTDKAAYKETLLKLAGLFKNNFEVFASYKIGNNNSLTEQILAAAPNF</sequence>
<reference key="1">
    <citation type="journal article" date="1999" name="Plant Physiol.">
        <title>Phosphoenolpyruvate carboxykinase in the C(4) monocot Urochloa panicoides is encoded by four differentially expressed genes.</title>
        <authorList>
            <person name="Finnegan P.M."/>
            <person name="Suzuki S."/>
            <person name="Ludwig M."/>
            <person name="Burnell J.N."/>
        </authorList>
    </citation>
    <scope>NUCLEOTIDE SEQUENCE [MRNA]</scope>
    <source>
        <tissue>Leaf</tissue>
    </source>
</reference>
<dbReference type="EC" id="4.1.1.49"/>
<dbReference type="EMBL" id="AF136161">
    <property type="protein sequence ID" value="AAD24485.1"/>
    <property type="molecule type" value="mRNA"/>
</dbReference>
<dbReference type="SMR" id="Q9XFA2"/>
<dbReference type="UniPathway" id="UPA00138"/>
<dbReference type="GO" id="GO:0005829">
    <property type="term" value="C:cytosol"/>
    <property type="evidence" value="ECO:0007669"/>
    <property type="project" value="TreeGrafter"/>
</dbReference>
<dbReference type="GO" id="GO:0005524">
    <property type="term" value="F:ATP binding"/>
    <property type="evidence" value="ECO:0007669"/>
    <property type="project" value="UniProtKB-KW"/>
</dbReference>
<dbReference type="GO" id="GO:0004612">
    <property type="term" value="F:phosphoenolpyruvate carboxykinase (ATP) activity"/>
    <property type="evidence" value="ECO:0007669"/>
    <property type="project" value="UniProtKB-EC"/>
</dbReference>
<dbReference type="GO" id="GO:0006094">
    <property type="term" value="P:gluconeogenesis"/>
    <property type="evidence" value="ECO:0007669"/>
    <property type="project" value="UniProtKB-UniPathway"/>
</dbReference>
<dbReference type="CDD" id="cd00484">
    <property type="entry name" value="PEPCK_ATP"/>
    <property type="match status" value="1"/>
</dbReference>
<dbReference type="FunFam" id="2.170.8.10:FF:000001">
    <property type="entry name" value="Phosphoenolpyruvate carboxykinase (ATP)"/>
    <property type="match status" value="1"/>
</dbReference>
<dbReference type="FunFam" id="3.40.449.10:FF:000009">
    <property type="entry name" value="Uncharacterized protein"/>
    <property type="match status" value="1"/>
</dbReference>
<dbReference type="Gene3D" id="3.90.228.20">
    <property type="match status" value="1"/>
</dbReference>
<dbReference type="Gene3D" id="3.40.449.10">
    <property type="entry name" value="Phosphoenolpyruvate Carboxykinase, domain 1"/>
    <property type="match status" value="1"/>
</dbReference>
<dbReference type="Gene3D" id="2.170.8.10">
    <property type="entry name" value="Phosphoenolpyruvate Carboxykinase, domain 2"/>
    <property type="match status" value="1"/>
</dbReference>
<dbReference type="HAMAP" id="MF_00453">
    <property type="entry name" value="PEPCK_ATP"/>
    <property type="match status" value="1"/>
</dbReference>
<dbReference type="InterPro" id="IPR001272">
    <property type="entry name" value="PEP_carboxykinase_ATP"/>
</dbReference>
<dbReference type="InterPro" id="IPR013035">
    <property type="entry name" value="PEP_carboxykinase_C"/>
</dbReference>
<dbReference type="InterPro" id="IPR008210">
    <property type="entry name" value="PEP_carboxykinase_N"/>
</dbReference>
<dbReference type="InterPro" id="IPR015994">
    <property type="entry name" value="PEPCK_ATP_CS"/>
</dbReference>
<dbReference type="NCBIfam" id="TIGR00224">
    <property type="entry name" value="pckA"/>
    <property type="match status" value="1"/>
</dbReference>
<dbReference type="NCBIfam" id="NF006820">
    <property type="entry name" value="PRK09344.1-2"/>
    <property type="match status" value="1"/>
</dbReference>
<dbReference type="NCBIfam" id="NF006821">
    <property type="entry name" value="PRK09344.1-3"/>
    <property type="match status" value="1"/>
</dbReference>
<dbReference type="PANTHER" id="PTHR30031:SF0">
    <property type="entry name" value="PHOSPHOENOLPYRUVATE CARBOXYKINASE (ATP)"/>
    <property type="match status" value="1"/>
</dbReference>
<dbReference type="PANTHER" id="PTHR30031">
    <property type="entry name" value="PHOSPHOENOLPYRUVATE CARBOXYKINASE ATP"/>
    <property type="match status" value="1"/>
</dbReference>
<dbReference type="Pfam" id="PF01293">
    <property type="entry name" value="PEPCK_ATP"/>
    <property type="match status" value="1"/>
</dbReference>
<dbReference type="PIRSF" id="PIRSF006294">
    <property type="entry name" value="PEP_crbxkin"/>
    <property type="match status" value="1"/>
</dbReference>
<dbReference type="SUPFAM" id="SSF68923">
    <property type="entry name" value="PEP carboxykinase N-terminal domain"/>
    <property type="match status" value="1"/>
</dbReference>
<dbReference type="SUPFAM" id="SSF53795">
    <property type="entry name" value="PEP carboxykinase-like"/>
    <property type="match status" value="1"/>
</dbReference>
<dbReference type="PROSITE" id="PS00532">
    <property type="entry name" value="PEPCK_ATP"/>
    <property type="match status" value="1"/>
</dbReference>